<reference key="1">
    <citation type="journal article" date="2004" name="Nat. Genet.">
        <title>Evidence in the Legionella pneumophila genome for exploitation of host cell functions and high genome plasticity.</title>
        <authorList>
            <person name="Cazalet C."/>
            <person name="Rusniok C."/>
            <person name="Brueggemann H."/>
            <person name="Zidane N."/>
            <person name="Magnier A."/>
            <person name="Ma L."/>
            <person name="Tichit M."/>
            <person name="Jarraud S."/>
            <person name="Bouchier C."/>
            <person name="Vandenesch F."/>
            <person name="Kunst F."/>
            <person name="Etienne J."/>
            <person name="Glaser P."/>
            <person name="Buchrieser C."/>
        </authorList>
    </citation>
    <scope>NUCLEOTIDE SEQUENCE [LARGE SCALE GENOMIC DNA]</scope>
    <source>
        <strain>Paris</strain>
    </source>
</reference>
<proteinExistence type="inferred from homology"/>
<feature type="chain" id="PRO_0000187135" description="2-dehydro-3-deoxyphosphooctonate aldolase">
    <location>
        <begin position="1"/>
        <end position="274"/>
    </location>
</feature>
<sequence>MRLCGFEAGLDKPLFLIAGPCVIESEELALETAGYLKEMCSQLNIPFIYKSSFDKANRSSISSYRGPGFEKGLSILEKVKSQIGVPVLTDVHEDTPLFEVSSVVDVLQTPAFLCRQTNFIQKVAAMNKPVNIKKGQFLAPWEMKHVIAKAKAQGNEQIMACERGVSFGYNNLVSDMRSLVIMRETGCPVVYDATHSVQLPGGNNGVSGGQREFIPALARAAVAVGISGLFMETHPDPDKALSDGPNSWPLDKMKQLLESLKAADEVYKKYSTDF</sequence>
<comment type="catalytic activity">
    <reaction evidence="1">
        <text>D-arabinose 5-phosphate + phosphoenolpyruvate + H2O = 3-deoxy-alpha-D-manno-2-octulosonate-8-phosphate + phosphate</text>
        <dbReference type="Rhea" id="RHEA:14053"/>
        <dbReference type="ChEBI" id="CHEBI:15377"/>
        <dbReference type="ChEBI" id="CHEBI:43474"/>
        <dbReference type="ChEBI" id="CHEBI:57693"/>
        <dbReference type="ChEBI" id="CHEBI:58702"/>
        <dbReference type="ChEBI" id="CHEBI:85985"/>
        <dbReference type="EC" id="2.5.1.55"/>
    </reaction>
</comment>
<comment type="pathway">
    <text evidence="1">Carbohydrate biosynthesis; 3-deoxy-D-manno-octulosonate biosynthesis; 3-deoxy-D-manno-octulosonate from D-ribulose 5-phosphate: step 2/3.</text>
</comment>
<comment type="pathway">
    <text evidence="1">Bacterial outer membrane biogenesis; lipopolysaccharide biosynthesis.</text>
</comment>
<comment type="subcellular location">
    <subcellularLocation>
        <location evidence="1">Cytoplasm</location>
    </subcellularLocation>
</comment>
<comment type="similarity">
    <text evidence="1">Belongs to the KdsA family.</text>
</comment>
<name>KDSA_LEGPA</name>
<gene>
    <name evidence="1" type="primary">kdsA</name>
    <name type="ordered locus">lpp1185</name>
</gene>
<accession>Q5X5Y5</accession>
<dbReference type="EC" id="2.5.1.55" evidence="1"/>
<dbReference type="EMBL" id="CR628336">
    <property type="protein sequence ID" value="CAH12336.1"/>
    <property type="molecule type" value="Genomic_DNA"/>
</dbReference>
<dbReference type="RefSeq" id="WP_010946916.1">
    <property type="nucleotide sequence ID" value="NC_006368.1"/>
</dbReference>
<dbReference type="SMR" id="Q5X5Y5"/>
<dbReference type="GeneID" id="57035172"/>
<dbReference type="KEGG" id="lpp:lpp1185"/>
<dbReference type="LegioList" id="lpp1185"/>
<dbReference type="HOGENOM" id="CLU_036666_0_0_6"/>
<dbReference type="UniPathway" id="UPA00030"/>
<dbReference type="UniPathway" id="UPA00357">
    <property type="reaction ID" value="UER00474"/>
</dbReference>
<dbReference type="GO" id="GO:0005737">
    <property type="term" value="C:cytoplasm"/>
    <property type="evidence" value="ECO:0007669"/>
    <property type="project" value="UniProtKB-SubCell"/>
</dbReference>
<dbReference type="GO" id="GO:0008676">
    <property type="term" value="F:3-deoxy-8-phosphooctulonate synthase activity"/>
    <property type="evidence" value="ECO:0007669"/>
    <property type="project" value="UniProtKB-UniRule"/>
</dbReference>
<dbReference type="GO" id="GO:0019294">
    <property type="term" value="P:keto-3-deoxy-D-manno-octulosonic acid biosynthetic process"/>
    <property type="evidence" value="ECO:0007669"/>
    <property type="project" value="UniProtKB-UniRule"/>
</dbReference>
<dbReference type="Gene3D" id="3.20.20.70">
    <property type="entry name" value="Aldolase class I"/>
    <property type="match status" value="1"/>
</dbReference>
<dbReference type="HAMAP" id="MF_00056">
    <property type="entry name" value="KDO8P_synth"/>
    <property type="match status" value="1"/>
</dbReference>
<dbReference type="InterPro" id="IPR013785">
    <property type="entry name" value="Aldolase_TIM"/>
</dbReference>
<dbReference type="InterPro" id="IPR006218">
    <property type="entry name" value="DAHP1/KDSA"/>
</dbReference>
<dbReference type="InterPro" id="IPR006269">
    <property type="entry name" value="KDO8P_synthase"/>
</dbReference>
<dbReference type="NCBIfam" id="TIGR01362">
    <property type="entry name" value="KDO8P_synth"/>
    <property type="match status" value="1"/>
</dbReference>
<dbReference type="NCBIfam" id="NF003543">
    <property type="entry name" value="PRK05198.1"/>
    <property type="match status" value="1"/>
</dbReference>
<dbReference type="PANTHER" id="PTHR21057">
    <property type="entry name" value="PHOSPHO-2-DEHYDRO-3-DEOXYHEPTONATE ALDOLASE"/>
    <property type="match status" value="1"/>
</dbReference>
<dbReference type="Pfam" id="PF00793">
    <property type="entry name" value="DAHP_synth_1"/>
    <property type="match status" value="1"/>
</dbReference>
<dbReference type="SUPFAM" id="SSF51569">
    <property type="entry name" value="Aldolase"/>
    <property type="match status" value="1"/>
</dbReference>
<evidence type="ECO:0000255" key="1">
    <source>
        <dbReference type="HAMAP-Rule" id="MF_00056"/>
    </source>
</evidence>
<protein>
    <recommendedName>
        <fullName evidence="1">2-dehydro-3-deoxyphosphooctonate aldolase</fullName>
        <ecNumber evidence="1">2.5.1.55</ecNumber>
    </recommendedName>
    <alternativeName>
        <fullName evidence="1">3-deoxy-D-manno-octulosonic acid 8-phosphate synthase</fullName>
    </alternativeName>
    <alternativeName>
        <fullName evidence="1">KDO-8-phosphate synthase</fullName>
        <shortName evidence="1">KDO 8-P synthase</shortName>
        <shortName evidence="1">KDOPS</shortName>
    </alternativeName>
    <alternativeName>
        <fullName evidence="1">Phospho-2-dehydro-3-deoxyoctonate aldolase</fullName>
    </alternativeName>
</protein>
<organism>
    <name type="scientific">Legionella pneumophila (strain Paris)</name>
    <dbReference type="NCBI Taxonomy" id="297246"/>
    <lineage>
        <taxon>Bacteria</taxon>
        <taxon>Pseudomonadati</taxon>
        <taxon>Pseudomonadota</taxon>
        <taxon>Gammaproteobacteria</taxon>
        <taxon>Legionellales</taxon>
        <taxon>Legionellaceae</taxon>
        <taxon>Legionella</taxon>
    </lineage>
</organism>
<keyword id="KW-0963">Cytoplasm</keyword>
<keyword id="KW-0448">Lipopolysaccharide biosynthesis</keyword>
<keyword id="KW-0808">Transferase</keyword>